<comment type="function">
    <text evidence="8 9">Functions as a GTPase (PubMed:16209721). May act by mediating the release of NMD3 from the 60S ribosomal subunit after export into the cytoplasm during the 60S ribosomal subunit maturation (PubMed:31148378).</text>
</comment>
<comment type="catalytic activity">
    <reaction evidence="8">
        <text>GTP + H2O = GDP + phosphate + H(+)</text>
        <dbReference type="Rhea" id="RHEA:19669"/>
        <dbReference type="ChEBI" id="CHEBI:15377"/>
        <dbReference type="ChEBI" id="CHEBI:15378"/>
        <dbReference type="ChEBI" id="CHEBI:37565"/>
        <dbReference type="ChEBI" id="CHEBI:43474"/>
        <dbReference type="ChEBI" id="CHEBI:58189"/>
    </reaction>
</comment>
<comment type="subcellular location">
    <subcellularLocation>
        <location evidence="8">Cytoplasm</location>
    </subcellularLocation>
    <subcellularLocation>
        <location evidence="8">Endoplasmic reticulum</location>
    </subcellularLocation>
    <subcellularLocation>
        <location evidence="8">Nucleus</location>
        <location evidence="8">Cajal body</location>
    </subcellularLocation>
    <text evidence="8">between the cytosol and Cajal bodies via a XPO1/CRM1-dependent export mechanism.</text>
</comment>
<comment type="domain">
    <text evidence="10">In contrast to other GTP-binding proteins, this family is characterized by a circular permutation of the GTPase motifs described by a G4-G1-G3 pattern.</text>
</comment>
<comment type="similarity">
    <text evidence="3">Belongs to the TRAFAC class YlqF/YawG GTPase family. LSG1 subfamily.</text>
</comment>
<comment type="sequence caution" evidence="11">
    <conflict type="miscellaneous discrepancy">
        <sequence resource="EMBL-CDS" id="AAH15042"/>
    </conflict>
    <text>Contaminating sequence. Potential poly-A sequence.</text>
</comment>
<comment type="sequence caution" evidence="11">
    <conflict type="miscellaneous discrepancy">
        <sequence resource="EMBL-CDS" id="AAH40119"/>
    </conflict>
    <text>Contaminating sequence. Potential poly-A sequence.</text>
</comment>
<keyword id="KW-0002">3D-structure</keyword>
<keyword id="KW-0963">Cytoplasm</keyword>
<keyword id="KW-0256">Endoplasmic reticulum</keyword>
<keyword id="KW-0342">GTP-binding</keyword>
<keyword id="KW-0378">Hydrolase</keyword>
<keyword id="KW-0547">Nucleotide-binding</keyword>
<keyword id="KW-0539">Nucleus</keyword>
<keyword id="KW-0597">Phosphoprotein</keyword>
<keyword id="KW-0653">Protein transport</keyword>
<keyword id="KW-1267">Proteomics identification</keyword>
<keyword id="KW-1185">Reference proteome</keyword>
<keyword id="KW-0813">Transport</keyword>
<reference key="1">
    <citation type="journal article" date="2001" name="Genome Res.">
        <title>Towards a catalog of human genes and proteins: sequencing and analysis of 500 novel complete protein coding human cDNAs.</title>
        <authorList>
            <person name="Wiemann S."/>
            <person name="Weil B."/>
            <person name="Wellenreuther R."/>
            <person name="Gassenhuber J."/>
            <person name="Glassl S."/>
            <person name="Ansorge W."/>
            <person name="Boecher M."/>
            <person name="Bloecker H."/>
            <person name="Bauersachs S."/>
            <person name="Blum H."/>
            <person name="Lauber J."/>
            <person name="Duesterhoeft A."/>
            <person name="Beyer A."/>
            <person name="Koehrer K."/>
            <person name="Strack N."/>
            <person name="Mewes H.-W."/>
            <person name="Ottenwaelder B."/>
            <person name="Obermaier B."/>
            <person name="Tampe J."/>
            <person name="Heubner D."/>
            <person name="Wambutt R."/>
            <person name="Korn B."/>
            <person name="Klein M."/>
            <person name="Poustka A."/>
        </authorList>
    </citation>
    <scope>NUCLEOTIDE SEQUENCE [LARGE SCALE MRNA]</scope>
    <scope>VARIANT GLU-267</scope>
    <source>
        <tissue>Testis</tissue>
    </source>
</reference>
<reference key="2">
    <citation type="journal article" date="2006" name="Nature">
        <title>The DNA sequence, annotation and analysis of human chromosome 3.</title>
        <authorList>
            <person name="Muzny D.M."/>
            <person name="Scherer S.E."/>
            <person name="Kaul R."/>
            <person name="Wang J."/>
            <person name="Yu J."/>
            <person name="Sudbrak R."/>
            <person name="Buhay C.J."/>
            <person name="Chen R."/>
            <person name="Cree A."/>
            <person name="Ding Y."/>
            <person name="Dugan-Rocha S."/>
            <person name="Gill R."/>
            <person name="Gunaratne P."/>
            <person name="Harris R.A."/>
            <person name="Hawes A.C."/>
            <person name="Hernandez J."/>
            <person name="Hodgson A.V."/>
            <person name="Hume J."/>
            <person name="Jackson A."/>
            <person name="Khan Z.M."/>
            <person name="Kovar-Smith C."/>
            <person name="Lewis L.R."/>
            <person name="Lozado R.J."/>
            <person name="Metzker M.L."/>
            <person name="Milosavljevic A."/>
            <person name="Miner G.R."/>
            <person name="Morgan M.B."/>
            <person name="Nazareth L.V."/>
            <person name="Scott G."/>
            <person name="Sodergren E."/>
            <person name="Song X.-Z."/>
            <person name="Steffen D."/>
            <person name="Wei S."/>
            <person name="Wheeler D.A."/>
            <person name="Wright M.W."/>
            <person name="Worley K.C."/>
            <person name="Yuan Y."/>
            <person name="Zhang Z."/>
            <person name="Adams C.Q."/>
            <person name="Ansari-Lari M.A."/>
            <person name="Ayele M."/>
            <person name="Brown M.J."/>
            <person name="Chen G."/>
            <person name="Chen Z."/>
            <person name="Clendenning J."/>
            <person name="Clerc-Blankenburg K.P."/>
            <person name="Chen R."/>
            <person name="Chen Z."/>
            <person name="Davis C."/>
            <person name="Delgado O."/>
            <person name="Dinh H.H."/>
            <person name="Dong W."/>
            <person name="Draper H."/>
            <person name="Ernst S."/>
            <person name="Fu G."/>
            <person name="Gonzalez-Garay M.L."/>
            <person name="Garcia D.K."/>
            <person name="Gillett W."/>
            <person name="Gu J."/>
            <person name="Hao B."/>
            <person name="Haugen E."/>
            <person name="Havlak P."/>
            <person name="He X."/>
            <person name="Hennig S."/>
            <person name="Hu S."/>
            <person name="Huang W."/>
            <person name="Jackson L.R."/>
            <person name="Jacob L.S."/>
            <person name="Kelly S.H."/>
            <person name="Kube M."/>
            <person name="Levy R."/>
            <person name="Li Z."/>
            <person name="Liu B."/>
            <person name="Liu J."/>
            <person name="Liu W."/>
            <person name="Lu J."/>
            <person name="Maheshwari M."/>
            <person name="Nguyen B.-V."/>
            <person name="Okwuonu G.O."/>
            <person name="Palmeiri A."/>
            <person name="Pasternak S."/>
            <person name="Perez L.M."/>
            <person name="Phelps K.A."/>
            <person name="Plopper F.J."/>
            <person name="Qiang B."/>
            <person name="Raymond C."/>
            <person name="Rodriguez R."/>
            <person name="Saenphimmachak C."/>
            <person name="Santibanez J."/>
            <person name="Shen H."/>
            <person name="Shen Y."/>
            <person name="Subramanian S."/>
            <person name="Tabor P.E."/>
            <person name="Verduzco D."/>
            <person name="Waldron L."/>
            <person name="Wang J."/>
            <person name="Wang J."/>
            <person name="Wang Q."/>
            <person name="Williams G.A."/>
            <person name="Wong G.K.-S."/>
            <person name="Yao Z."/>
            <person name="Zhang J."/>
            <person name="Zhang X."/>
            <person name="Zhao G."/>
            <person name="Zhou J."/>
            <person name="Zhou Y."/>
            <person name="Nelson D."/>
            <person name="Lehrach H."/>
            <person name="Reinhardt R."/>
            <person name="Naylor S.L."/>
            <person name="Yang H."/>
            <person name="Olson M."/>
            <person name="Weinstock G."/>
            <person name="Gibbs R.A."/>
        </authorList>
    </citation>
    <scope>NUCLEOTIDE SEQUENCE [LARGE SCALE GENOMIC DNA]</scope>
</reference>
<reference key="3">
    <citation type="journal article" date="2004" name="Genome Res.">
        <title>The status, quality, and expansion of the NIH full-length cDNA project: the Mammalian Gene Collection (MGC).</title>
        <authorList>
            <consortium name="The MGC Project Team"/>
        </authorList>
    </citation>
    <scope>NUCLEOTIDE SEQUENCE [LARGE SCALE MRNA]</scope>
    <scope>VARIANT GLU-267</scope>
    <source>
        <tissue>Duodenum</tissue>
        <tissue>Placenta</tissue>
        <tissue>Skin</tissue>
    </source>
</reference>
<reference key="4">
    <citation type="journal article" date="2004" name="Nat. Genet.">
        <title>Complete sequencing and characterization of 21,243 full-length human cDNAs.</title>
        <authorList>
            <person name="Ota T."/>
            <person name="Suzuki Y."/>
            <person name="Nishikawa T."/>
            <person name="Otsuki T."/>
            <person name="Sugiyama T."/>
            <person name="Irie R."/>
            <person name="Wakamatsu A."/>
            <person name="Hayashi K."/>
            <person name="Sato H."/>
            <person name="Nagai K."/>
            <person name="Kimura K."/>
            <person name="Makita H."/>
            <person name="Sekine M."/>
            <person name="Obayashi M."/>
            <person name="Nishi T."/>
            <person name="Shibahara T."/>
            <person name="Tanaka T."/>
            <person name="Ishii S."/>
            <person name="Yamamoto J."/>
            <person name="Saito K."/>
            <person name="Kawai Y."/>
            <person name="Isono Y."/>
            <person name="Nakamura Y."/>
            <person name="Nagahari K."/>
            <person name="Murakami K."/>
            <person name="Yasuda T."/>
            <person name="Iwayanagi T."/>
            <person name="Wagatsuma M."/>
            <person name="Shiratori A."/>
            <person name="Sudo H."/>
            <person name="Hosoiri T."/>
            <person name="Kaku Y."/>
            <person name="Kodaira H."/>
            <person name="Kondo H."/>
            <person name="Sugawara M."/>
            <person name="Takahashi M."/>
            <person name="Kanda K."/>
            <person name="Yokoi T."/>
            <person name="Furuya T."/>
            <person name="Kikkawa E."/>
            <person name="Omura Y."/>
            <person name="Abe K."/>
            <person name="Kamihara K."/>
            <person name="Katsuta N."/>
            <person name="Sato K."/>
            <person name="Tanikawa M."/>
            <person name="Yamazaki M."/>
            <person name="Ninomiya K."/>
            <person name="Ishibashi T."/>
            <person name="Yamashita H."/>
            <person name="Murakawa K."/>
            <person name="Fujimori K."/>
            <person name="Tanai H."/>
            <person name="Kimata M."/>
            <person name="Watanabe M."/>
            <person name="Hiraoka S."/>
            <person name="Chiba Y."/>
            <person name="Ishida S."/>
            <person name="Ono Y."/>
            <person name="Takiguchi S."/>
            <person name="Watanabe S."/>
            <person name="Yosida M."/>
            <person name="Hotuta T."/>
            <person name="Kusano J."/>
            <person name="Kanehori K."/>
            <person name="Takahashi-Fujii A."/>
            <person name="Hara H."/>
            <person name="Tanase T.-O."/>
            <person name="Nomura Y."/>
            <person name="Togiya S."/>
            <person name="Komai F."/>
            <person name="Hara R."/>
            <person name="Takeuchi K."/>
            <person name="Arita M."/>
            <person name="Imose N."/>
            <person name="Musashino K."/>
            <person name="Yuuki H."/>
            <person name="Oshima A."/>
            <person name="Sasaki N."/>
            <person name="Aotsuka S."/>
            <person name="Yoshikawa Y."/>
            <person name="Matsunawa H."/>
            <person name="Ichihara T."/>
            <person name="Shiohata N."/>
            <person name="Sano S."/>
            <person name="Moriya S."/>
            <person name="Momiyama H."/>
            <person name="Satoh N."/>
            <person name="Takami S."/>
            <person name="Terashima Y."/>
            <person name="Suzuki O."/>
            <person name="Nakagawa S."/>
            <person name="Senoh A."/>
            <person name="Mizoguchi H."/>
            <person name="Goto Y."/>
            <person name="Shimizu F."/>
            <person name="Wakebe H."/>
            <person name="Hishigaki H."/>
            <person name="Watanabe T."/>
            <person name="Sugiyama A."/>
            <person name="Takemoto M."/>
            <person name="Kawakami B."/>
            <person name="Yamazaki M."/>
            <person name="Watanabe K."/>
            <person name="Kumagai A."/>
            <person name="Itakura S."/>
            <person name="Fukuzumi Y."/>
            <person name="Fujimori Y."/>
            <person name="Komiyama M."/>
            <person name="Tashiro H."/>
            <person name="Tanigami A."/>
            <person name="Fujiwara T."/>
            <person name="Ono T."/>
            <person name="Yamada K."/>
            <person name="Fujii Y."/>
            <person name="Ozaki K."/>
            <person name="Hirao M."/>
            <person name="Ohmori Y."/>
            <person name="Kawabata A."/>
            <person name="Hikiji T."/>
            <person name="Kobatake N."/>
            <person name="Inagaki H."/>
            <person name="Ikema Y."/>
            <person name="Okamoto S."/>
            <person name="Okitani R."/>
            <person name="Kawakami T."/>
            <person name="Noguchi S."/>
            <person name="Itoh T."/>
            <person name="Shigeta K."/>
            <person name="Senba T."/>
            <person name="Matsumura K."/>
            <person name="Nakajima Y."/>
            <person name="Mizuno T."/>
            <person name="Morinaga M."/>
            <person name="Sasaki M."/>
            <person name="Togashi T."/>
            <person name="Oyama M."/>
            <person name="Hata H."/>
            <person name="Watanabe M."/>
            <person name="Komatsu T."/>
            <person name="Mizushima-Sugano J."/>
            <person name="Satoh T."/>
            <person name="Shirai Y."/>
            <person name="Takahashi Y."/>
            <person name="Nakagawa K."/>
            <person name="Okumura K."/>
            <person name="Nagase T."/>
            <person name="Nomura N."/>
            <person name="Kikuchi H."/>
            <person name="Masuho Y."/>
            <person name="Yamashita R."/>
            <person name="Nakai K."/>
            <person name="Yada T."/>
            <person name="Nakamura Y."/>
            <person name="Ohara O."/>
            <person name="Isogai T."/>
            <person name="Sugano S."/>
        </authorList>
    </citation>
    <scope>NUCLEOTIDE SEQUENCE [LARGE SCALE MRNA] OF 1-642</scope>
    <scope>VARIANT GLU-267</scope>
    <source>
        <tissue>Placenta</tissue>
    </source>
</reference>
<reference key="5">
    <citation type="journal article" date="2005" name="BMC Biol.">
        <title>Human Lsg1 defines a family of essential GTPases that correlates with the evolution of compartmentalization.</title>
        <authorList>
            <person name="Reynaud E.G."/>
            <person name="Andrade M.A."/>
            <person name="Bonneau F."/>
            <person name="Ly T.B."/>
            <person name="Knop M."/>
            <person name="Scheffzek K."/>
            <person name="Pepperkok R."/>
        </authorList>
    </citation>
    <scope>FUNCTION</scope>
    <scope>CATALYTIC ACTIVITY</scope>
    <scope>GTP-BINDING</scope>
    <scope>SUBCELLULAR LOCATION</scope>
</reference>
<reference key="6">
    <citation type="journal article" date="2008" name="Proc. Natl. Acad. Sci. U.S.A.">
        <title>A quantitative atlas of mitotic phosphorylation.</title>
        <authorList>
            <person name="Dephoure N."/>
            <person name="Zhou C."/>
            <person name="Villen J."/>
            <person name="Beausoleil S.A."/>
            <person name="Bakalarski C.E."/>
            <person name="Elledge S.J."/>
            <person name="Gygi S.P."/>
        </authorList>
    </citation>
    <scope>PHOSPHORYLATION [LARGE SCALE ANALYSIS] AT SER-252</scope>
    <scope>IDENTIFICATION BY MASS SPECTROMETRY [LARGE SCALE ANALYSIS]</scope>
    <source>
        <tissue>Cervix carcinoma</tissue>
    </source>
</reference>
<reference key="7">
    <citation type="journal article" date="2011" name="BMC Syst. Biol.">
        <title>Initial characterization of the human central proteome.</title>
        <authorList>
            <person name="Burkard T.R."/>
            <person name="Planyavsky M."/>
            <person name="Kaupe I."/>
            <person name="Breitwieser F.P."/>
            <person name="Buerckstuemmer T."/>
            <person name="Bennett K.L."/>
            <person name="Superti-Furga G."/>
            <person name="Colinge J."/>
        </authorList>
    </citation>
    <scope>IDENTIFICATION BY MASS SPECTROMETRY [LARGE SCALE ANALYSIS]</scope>
</reference>
<reference key="8">
    <citation type="journal article" date="2013" name="J. Proteome Res.">
        <title>Toward a comprehensive characterization of a human cancer cell phosphoproteome.</title>
        <authorList>
            <person name="Zhou H."/>
            <person name="Di Palma S."/>
            <person name="Preisinger C."/>
            <person name="Peng M."/>
            <person name="Polat A.N."/>
            <person name="Heck A.J."/>
            <person name="Mohammed S."/>
        </authorList>
    </citation>
    <scope>PHOSPHORYLATION [LARGE SCALE ANALYSIS] AT SER-93 AND SER-97</scope>
    <scope>IDENTIFICATION BY MASS SPECTROMETRY [LARGE SCALE ANALYSIS]</scope>
    <source>
        <tissue>Cervix carcinoma</tissue>
        <tissue>Erythroleukemia</tissue>
    </source>
</reference>
<reference key="9">
    <citation type="journal article" date="2019" name="Aging Cell">
        <title>Inhibition of the 60S ribosome biogenesis GTPase LSG1 causes endoplasmic reticular disruption and cellular senescence.</title>
        <authorList>
            <person name="Pantazi A."/>
            <person name="Quintanilla A."/>
            <person name="Hari P."/>
            <person name="Tarrats N."/>
            <person name="Parasyraki E."/>
            <person name="Dix F.L."/>
            <person name="Patel J."/>
            <person name="Chandra T."/>
            <person name="Acosta J.C."/>
            <person name="Finch A.J."/>
        </authorList>
    </citation>
    <scope>FUNCTION</scope>
</reference>
<protein>
    <recommendedName>
        <fullName evidence="1">Large subunit GTPase 1 homolog</fullName>
        <shortName evidence="10">hLsg1</shortName>
        <ecNumber evidence="8">3.6.5.-</ecNumber>
    </recommendedName>
</protein>
<accession>Q9H089</accession>
<accession>A0JLT4</accession>
<accession>A0PJK3</accession>
<accession>A6NI18</accession>
<accession>Q7L9H8</accession>
<accession>Q9NUK8</accession>
<feature type="chain" id="PRO_0000324553" description="Large subunit GTPase 1 homolog">
    <location>
        <begin position="1"/>
        <end position="658"/>
    </location>
</feature>
<feature type="domain" description="CP-type G" evidence="3">
    <location>
        <begin position="164"/>
        <end position="444"/>
    </location>
</feature>
<feature type="region of interest" description="Disordered" evidence="4">
    <location>
        <begin position="1"/>
        <end position="31"/>
    </location>
</feature>
<feature type="region of interest" description="Disordered" evidence="4">
    <location>
        <begin position="250"/>
        <end position="355"/>
    </location>
</feature>
<feature type="region of interest" description="Disordered" evidence="4">
    <location>
        <begin position="623"/>
        <end position="658"/>
    </location>
</feature>
<feature type="compositionally biased region" description="Basic residues" evidence="4">
    <location>
        <begin position="16"/>
        <end position="28"/>
    </location>
</feature>
<feature type="compositionally biased region" description="Polar residues" evidence="4">
    <location>
        <begin position="263"/>
        <end position="274"/>
    </location>
</feature>
<feature type="compositionally biased region" description="Basic and acidic residues" evidence="4">
    <location>
        <begin position="277"/>
        <end position="288"/>
    </location>
</feature>
<feature type="compositionally biased region" description="Acidic residues" evidence="4">
    <location>
        <begin position="299"/>
        <end position="328"/>
    </location>
</feature>
<feature type="compositionally biased region" description="Basic and acidic residues" evidence="4">
    <location>
        <begin position="329"/>
        <end position="348"/>
    </location>
</feature>
<feature type="compositionally biased region" description="Basic residues" evidence="4">
    <location>
        <begin position="636"/>
        <end position="658"/>
    </location>
</feature>
<feature type="binding site" evidence="2">
    <location>
        <begin position="212"/>
        <end position="215"/>
    </location>
    <ligand>
        <name>GTP</name>
        <dbReference type="ChEBI" id="CHEBI:37565"/>
    </ligand>
</feature>
<feature type="binding site" evidence="2">
    <location>
        <begin position="393"/>
        <end position="400"/>
    </location>
    <ligand>
        <name>GTP</name>
        <dbReference type="ChEBI" id="CHEBI:37565"/>
    </ligand>
</feature>
<feature type="binding site" evidence="2">
    <location>
        <begin position="437"/>
        <end position="440"/>
    </location>
    <ligand>
        <name>GTP</name>
        <dbReference type="ChEBI" id="CHEBI:37565"/>
    </ligand>
</feature>
<feature type="modified residue" description="Phosphoserine" evidence="13">
    <location>
        <position position="93"/>
    </location>
</feature>
<feature type="modified residue" description="Phosphoserine" evidence="13">
    <location>
        <position position="97"/>
    </location>
</feature>
<feature type="modified residue" description="Phosphoserine" evidence="12">
    <location>
        <position position="252"/>
    </location>
</feature>
<feature type="sequence variant" id="VAR_039826" description="In dbSNP:rs34423045.">
    <original>L</original>
    <variation>P</variation>
    <location>
        <position position="92"/>
    </location>
</feature>
<feature type="sequence variant" id="VAR_039827" description="In dbSNP:rs1675953." evidence="5 6 7">
    <original>K</original>
    <variation>E</variation>
    <location>
        <position position="267"/>
    </location>
</feature>
<name>LSG1_HUMAN</name>
<gene>
    <name type="primary">LSG1</name>
</gene>
<evidence type="ECO:0000250" key="1">
    <source>
        <dbReference type="UniProtKB" id="P53145"/>
    </source>
</evidence>
<evidence type="ECO:0000255" key="2"/>
<evidence type="ECO:0000255" key="3">
    <source>
        <dbReference type="PROSITE-ProRule" id="PRU01058"/>
    </source>
</evidence>
<evidence type="ECO:0000256" key="4">
    <source>
        <dbReference type="SAM" id="MobiDB-lite"/>
    </source>
</evidence>
<evidence type="ECO:0000269" key="5">
    <source>
    </source>
</evidence>
<evidence type="ECO:0000269" key="6">
    <source>
    </source>
</evidence>
<evidence type="ECO:0000269" key="7">
    <source>
    </source>
</evidence>
<evidence type="ECO:0000269" key="8">
    <source>
    </source>
</evidence>
<evidence type="ECO:0000269" key="9">
    <source>
    </source>
</evidence>
<evidence type="ECO:0000303" key="10">
    <source>
    </source>
</evidence>
<evidence type="ECO:0000305" key="11"/>
<evidence type="ECO:0007744" key="12">
    <source>
    </source>
</evidence>
<evidence type="ECO:0007744" key="13">
    <source>
    </source>
</evidence>
<proteinExistence type="evidence at protein level"/>
<dbReference type="EC" id="3.6.5.-" evidence="8"/>
<dbReference type="EMBL" id="AL136897">
    <property type="protein sequence ID" value="CAB66831.1"/>
    <property type="molecule type" value="mRNA"/>
</dbReference>
<dbReference type="EMBL" id="AC046143">
    <property type="status" value="NOT_ANNOTATED_CDS"/>
    <property type="molecule type" value="Genomic_DNA"/>
</dbReference>
<dbReference type="EMBL" id="BC015042">
    <property type="protein sequence ID" value="AAH15042.1"/>
    <property type="status" value="ALT_SEQ"/>
    <property type="molecule type" value="mRNA"/>
</dbReference>
<dbReference type="EMBL" id="BC040119">
    <property type="protein sequence ID" value="AAH40119.1"/>
    <property type="status" value="ALT_SEQ"/>
    <property type="molecule type" value="mRNA"/>
</dbReference>
<dbReference type="EMBL" id="BC068500">
    <property type="protein sequence ID" value="AAH68500.1"/>
    <property type="molecule type" value="mRNA"/>
</dbReference>
<dbReference type="EMBL" id="AK002163">
    <property type="protein sequence ID" value="BAA92116.1"/>
    <property type="molecule type" value="mRNA"/>
</dbReference>
<dbReference type="CCDS" id="CCDS33922.1"/>
<dbReference type="RefSeq" id="NP_060855.2">
    <property type="nucleotide sequence ID" value="NM_018385.3"/>
</dbReference>
<dbReference type="PDB" id="6LSR">
    <property type="method" value="EM"/>
    <property type="resolution" value="3.13 A"/>
    <property type="chains" value="1=1-658"/>
</dbReference>
<dbReference type="PDBsum" id="6LSR"/>
<dbReference type="EMDB" id="EMD-0963"/>
<dbReference type="SMR" id="Q9H089"/>
<dbReference type="BioGRID" id="120622">
    <property type="interactions" value="185"/>
</dbReference>
<dbReference type="FunCoup" id="Q9H089">
    <property type="interactions" value="4038"/>
</dbReference>
<dbReference type="IntAct" id="Q9H089">
    <property type="interactions" value="66"/>
</dbReference>
<dbReference type="MINT" id="Q9H089"/>
<dbReference type="STRING" id="9606.ENSP00000265245"/>
<dbReference type="GlyGen" id="Q9H089">
    <property type="glycosylation" value="2 sites, 1 O-linked glycan (1 site)"/>
</dbReference>
<dbReference type="iPTMnet" id="Q9H089"/>
<dbReference type="PhosphoSitePlus" id="Q9H089"/>
<dbReference type="SwissPalm" id="Q9H089"/>
<dbReference type="BioMuta" id="LSG1"/>
<dbReference type="DMDM" id="172045910"/>
<dbReference type="jPOST" id="Q9H089"/>
<dbReference type="MassIVE" id="Q9H089"/>
<dbReference type="PaxDb" id="9606-ENSP00000265245"/>
<dbReference type="PeptideAtlas" id="Q9H089"/>
<dbReference type="ProteomicsDB" id="80217"/>
<dbReference type="Pumba" id="Q9H089"/>
<dbReference type="Antibodypedia" id="46856">
    <property type="antibodies" value="45 antibodies from 16 providers"/>
</dbReference>
<dbReference type="DNASU" id="55341"/>
<dbReference type="Ensembl" id="ENST00000265245.10">
    <property type="protein sequence ID" value="ENSP00000265245.5"/>
    <property type="gene ID" value="ENSG00000041802.11"/>
</dbReference>
<dbReference type="GeneID" id="55341"/>
<dbReference type="KEGG" id="hsa:55341"/>
<dbReference type="MANE-Select" id="ENST00000265245.10">
    <property type="protein sequence ID" value="ENSP00000265245.5"/>
    <property type="RefSeq nucleotide sequence ID" value="NM_018385.3"/>
    <property type="RefSeq protein sequence ID" value="NP_060855.2"/>
</dbReference>
<dbReference type="UCSC" id="uc003fui.3">
    <property type="organism name" value="human"/>
</dbReference>
<dbReference type="AGR" id="HGNC:25652"/>
<dbReference type="CTD" id="55341"/>
<dbReference type="GeneCards" id="LSG1"/>
<dbReference type="HGNC" id="HGNC:25652">
    <property type="gene designation" value="LSG1"/>
</dbReference>
<dbReference type="HPA" id="ENSG00000041802">
    <property type="expression patterns" value="Low tissue specificity"/>
</dbReference>
<dbReference type="MIM" id="610780">
    <property type="type" value="gene"/>
</dbReference>
<dbReference type="neXtProt" id="NX_Q9H089"/>
<dbReference type="OpenTargets" id="ENSG00000041802"/>
<dbReference type="PharmGKB" id="PA142671501"/>
<dbReference type="VEuPathDB" id="HostDB:ENSG00000041802"/>
<dbReference type="eggNOG" id="KOG1424">
    <property type="taxonomic scope" value="Eukaryota"/>
</dbReference>
<dbReference type="GeneTree" id="ENSGT00940000156442"/>
<dbReference type="HOGENOM" id="CLU_011072_7_0_1"/>
<dbReference type="InParanoid" id="Q9H089"/>
<dbReference type="OMA" id="VNKADMM"/>
<dbReference type="OrthoDB" id="61815at2759"/>
<dbReference type="PAN-GO" id="Q9H089">
    <property type="GO annotations" value="3 GO annotations based on evolutionary models"/>
</dbReference>
<dbReference type="PhylomeDB" id="Q9H089"/>
<dbReference type="TreeFam" id="TF105747"/>
<dbReference type="PathwayCommons" id="Q9H089"/>
<dbReference type="SignaLink" id="Q9H089"/>
<dbReference type="BioGRID-ORCS" id="55341">
    <property type="hits" value="704 hits in 1164 CRISPR screens"/>
</dbReference>
<dbReference type="CD-CODE" id="6F24707C">
    <property type="entry name" value="Cajal body"/>
</dbReference>
<dbReference type="ChiTaRS" id="LSG1">
    <property type="organism name" value="human"/>
</dbReference>
<dbReference type="GeneWiki" id="LSG1"/>
<dbReference type="GenomeRNAi" id="55341"/>
<dbReference type="Pharos" id="Q9H089">
    <property type="development level" value="Tbio"/>
</dbReference>
<dbReference type="PRO" id="PR:Q9H089"/>
<dbReference type="Proteomes" id="UP000005640">
    <property type="component" value="Chromosome 3"/>
</dbReference>
<dbReference type="RNAct" id="Q9H089">
    <property type="molecule type" value="protein"/>
</dbReference>
<dbReference type="Bgee" id="ENSG00000041802">
    <property type="expression patterns" value="Expressed in granulocyte and 206 other cell types or tissues"/>
</dbReference>
<dbReference type="ExpressionAtlas" id="Q9H089">
    <property type="expression patterns" value="baseline and differential"/>
</dbReference>
<dbReference type="GO" id="GO:0015030">
    <property type="term" value="C:Cajal body"/>
    <property type="evidence" value="ECO:0000314"/>
    <property type="project" value="UniProtKB"/>
</dbReference>
<dbReference type="GO" id="GO:0005829">
    <property type="term" value="C:cytosol"/>
    <property type="evidence" value="ECO:0000314"/>
    <property type="project" value="HPA"/>
</dbReference>
<dbReference type="GO" id="GO:0005783">
    <property type="term" value="C:endoplasmic reticulum"/>
    <property type="evidence" value="ECO:0000314"/>
    <property type="project" value="UniProtKB"/>
</dbReference>
<dbReference type="GO" id="GO:0016020">
    <property type="term" value="C:membrane"/>
    <property type="evidence" value="ECO:0007005"/>
    <property type="project" value="UniProtKB"/>
</dbReference>
<dbReference type="GO" id="GO:0016604">
    <property type="term" value="C:nuclear body"/>
    <property type="evidence" value="ECO:0000314"/>
    <property type="project" value="HPA"/>
</dbReference>
<dbReference type="GO" id="GO:0005654">
    <property type="term" value="C:nucleoplasm"/>
    <property type="evidence" value="ECO:0000314"/>
    <property type="project" value="HPA"/>
</dbReference>
<dbReference type="GO" id="GO:0005525">
    <property type="term" value="F:GTP binding"/>
    <property type="evidence" value="ECO:0000314"/>
    <property type="project" value="UniProtKB"/>
</dbReference>
<dbReference type="GO" id="GO:0003924">
    <property type="term" value="F:GTPase activity"/>
    <property type="evidence" value="ECO:0000314"/>
    <property type="project" value="UniProtKB"/>
</dbReference>
<dbReference type="GO" id="GO:0051168">
    <property type="term" value="P:nuclear export"/>
    <property type="evidence" value="ECO:0000314"/>
    <property type="project" value="UniProtKB"/>
</dbReference>
<dbReference type="GO" id="GO:0015031">
    <property type="term" value="P:protein transport"/>
    <property type="evidence" value="ECO:0007669"/>
    <property type="project" value="UniProtKB-KW"/>
</dbReference>
<dbReference type="GO" id="GO:0000054">
    <property type="term" value="P:ribosomal subunit export from nucleus"/>
    <property type="evidence" value="ECO:0000318"/>
    <property type="project" value="GO_Central"/>
</dbReference>
<dbReference type="CDD" id="cd01857">
    <property type="entry name" value="HSR1_MMR1"/>
    <property type="match status" value="1"/>
</dbReference>
<dbReference type="Gene3D" id="3.40.50.300">
    <property type="entry name" value="P-loop containing nucleotide triphosphate hydrolases"/>
    <property type="match status" value="1"/>
</dbReference>
<dbReference type="InterPro" id="IPR030378">
    <property type="entry name" value="G_CP_dom"/>
</dbReference>
<dbReference type="InterPro" id="IPR043358">
    <property type="entry name" value="GNL1-like"/>
</dbReference>
<dbReference type="InterPro" id="IPR006073">
    <property type="entry name" value="GTP-bd"/>
</dbReference>
<dbReference type="InterPro" id="IPR027417">
    <property type="entry name" value="P-loop_NTPase"/>
</dbReference>
<dbReference type="PANTHER" id="PTHR45709:SF2">
    <property type="entry name" value="LARGE SUBUNIT GTPASE 1 HOMOLOG"/>
    <property type="match status" value="1"/>
</dbReference>
<dbReference type="PANTHER" id="PTHR45709">
    <property type="entry name" value="LARGE SUBUNIT GTPASE 1 HOMOLOG-RELATED"/>
    <property type="match status" value="1"/>
</dbReference>
<dbReference type="Pfam" id="PF01926">
    <property type="entry name" value="MMR_HSR1"/>
    <property type="match status" value="1"/>
</dbReference>
<dbReference type="PRINTS" id="PR00326">
    <property type="entry name" value="GTP1OBG"/>
</dbReference>
<dbReference type="SUPFAM" id="SSF52540">
    <property type="entry name" value="P-loop containing nucleoside triphosphate hydrolases"/>
    <property type="match status" value="1"/>
</dbReference>
<dbReference type="PROSITE" id="PS51721">
    <property type="entry name" value="G_CP"/>
    <property type="match status" value="1"/>
</dbReference>
<sequence>MGRRRAPAGGSLGRALMRHQTQRSRSHRHTDSWLHTSELNDGYDWGRLNLQSVTEQSSLDDFLATAELAGTEFVAEKLNIKFVPAEARTGLLSFEESQRIKKLHEENKQFLCIPRRPNWNQNTTPEELKQAEKDNFLEWRRQLVRLEEEQKLILTPFERNLDFWRQLWRVIERSDIVVQIVDARNPLLFRCEDLECYVKEMDANKENVILINKADLLTAEQRSAWAMYFEKEDVKVIFWSALAGAIPLNGDSEEEANRDDRQSNTTKFGHSSFDQAEISHSESEHLPARDSPSLSENPTTDEDDSEYEDCPEEEEDDWQTCSEEDGPKEEDCSQDWKESSTADSEARSRKTPQKRQIHNFSHLVSKQELLELFKELHTGRKVKDGQLTVGLVGYPNVGKSSTINTIMGNKKVSVSATPGHTKHFQTLYVEPGLCLCDCPGLVMPSFVSTKAEMTCSGILPIDQMRDHVPPVSLVCQNIPRHVLEATYGINIITPREDEDPHRPPTSEELLTAYGYMRGFMTAHGQPDQPRSARYILKDYVSGKLLYCHPPPGRDPVTFQHQHQRLLENKMNSDEIKMQLGRNKKAKQIENIVDKTFFHQENVRALTKGVQAVMGYKPGSGVVTASTASSENGAGKPWKKHGNRNKKEKSRRLYKHLDM</sequence>
<organism>
    <name type="scientific">Homo sapiens</name>
    <name type="common">Human</name>
    <dbReference type="NCBI Taxonomy" id="9606"/>
    <lineage>
        <taxon>Eukaryota</taxon>
        <taxon>Metazoa</taxon>
        <taxon>Chordata</taxon>
        <taxon>Craniata</taxon>
        <taxon>Vertebrata</taxon>
        <taxon>Euteleostomi</taxon>
        <taxon>Mammalia</taxon>
        <taxon>Eutheria</taxon>
        <taxon>Euarchontoglires</taxon>
        <taxon>Primates</taxon>
        <taxon>Haplorrhini</taxon>
        <taxon>Catarrhini</taxon>
        <taxon>Hominidae</taxon>
        <taxon>Homo</taxon>
    </lineage>
</organism>